<comment type="function">
    <text evidence="1">Catalyzes the transfer of an acetyl group from acetyl-CoA to tetrahydrodipicolinate.</text>
</comment>
<comment type="catalytic activity">
    <reaction evidence="1">
        <text>(S)-2,3,4,5-tetrahydrodipicolinate + acetyl-CoA + H2O = L-2-acetamido-6-oxoheptanedioate + CoA</text>
        <dbReference type="Rhea" id="RHEA:13085"/>
        <dbReference type="ChEBI" id="CHEBI:15377"/>
        <dbReference type="ChEBI" id="CHEBI:16845"/>
        <dbReference type="ChEBI" id="CHEBI:57287"/>
        <dbReference type="ChEBI" id="CHEBI:57288"/>
        <dbReference type="ChEBI" id="CHEBI:58117"/>
        <dbReference type="EC" id="2.3.1.89"/>
    </reaction>
</comment>
<comment type="pathway">
    <text evidence="1">Amino-acid biosynthesis; L-lysine biosynthesis via DAP pathway; LL-2,6-diaminopimelate from (S)-tetrahydrodipicolinate (acetylase route): step 1/3.</text>
</comment>
<comment type="similarity">
    <text evidence="1">Belongs to the transferase hexapeptide repeat family. DapH subfamily.</text>
</comment>
<evidence type="ECO:0000255" key="1">
    <source>
        <dbReference type="HAMAP-Rule" id="MF_01691"/>
    </source>
</evidence>
<organism>
    <name type="scientific">Listeria monocytogenes serotype 4b (strain F2365)</name>
    <dbReference type="NCBI Taxonomy" id="265669"/>
    <lineage>
        <taxon>Bacteria</taxon>
        <taxon>Bacillati</taxon>
        <taxon>Bacillota</taxon>
        <taxon>Bacilli</taxon>
        <taxon>Bacillales</taxon>
        <taxon>Listeriaceae</taxon>
        <taxon>Listeria</taxon>
    </lineage>
</organism>
<protein>
    <recommendedName>
        <fullName evidence="1">2,3,4,5-tetrahydropyridine-2,6-dicarboxylate N-acetyltransferase</fullName>
        <ecNumber evidence="1">2.3.1.89</ecNumber>
    </recommendedName>
    <alternativeName>
        <fullName evidence="1">Tetrahydrodipicolinate N-acetyltransferase</fullName>
        <shortName evidence="1">THP acetyltransferase</shortName>
        <shortName evidence="1">Tetrahydropicolinate acetylase</shortName>
    </alternativeName>
</protein>
<gene>
    <name evidence="1" type="primary">dapH</name>
    <name type="ordered locus">LMOf2365_1032</name>
</gene>
<keyword id="KW-0012">Acyltransferase</keyword>
<keyword id="KW-0028">Amino-acid biosynthesis</keyword>
<keyword id="KW-0220">Diaminopimelate biosynthesis</keyword>
<keyword id="KW-0457">Lysine biosynthesis</keyword>
<keyword id="KW-0677">Repeat</keyword>
<keyword id="KW-0808">Transferase</keyword>
<feature type="chain" id="PRO_0000376680" description="2,3,4,5-tetrahydropyridine-2,6-dicarboxylate N-acetyltransferase">
    <location>
        <begin position="1"/>
        <end position="236"/>
    </location>
</feature>
<proteinExistence type="inferred from homology"/>
<accession>Q721F5</accession>
<reference key="1">
    <citation type="journal article" date="2004" name="Nucleic Acids Res.">
        <title>Whole genome comparisons of serotype 4b and 1/2a strains of the food-borne pathogen Listeria monocytogenes reveal new insights into the core genome components of this species.</title>
        <authorList>
            <person name="Nelson K.E."/>
            <person name="Fouts D.E."/>
            <person name="Mongodin E.F."/>
            <person name="Ravel J."/>
            <person name="DeBoy R.T."/>
            <person name="Kolonay J.F."/>
            <person name="Rasko D.A."/>
            <person name="Angiuoli S.V."/>
            <person name="Gill S.R."/>
            <person name="Paulsen I.T."/>
            <person name="Peterson J.D."/>
            <person name="White O."/>
            <person name="Nelson W.C."/>
            <person name="Nierman W.C."/>
            <person name="Beanan M.J."/>
            <person name="Brinkac L.M."/>
            <person name="Daugherty S.C."/>
            <person name="Dodson R.J."/>
            <person name="Durkin A.S."/>
            <person name="Madupu R."/>
            <person name="Haft D.H."/>
            <person name="Selengut J."/>
            <person name="Van Aken S.E."/>
            <person name="Khouri H.M."/>
            <person name="Fedorova N."/>
            <person name="Forberger H.A."/>
            <person name="Tran B."/>
            <person name="Kathariou S."/>
            <person name="Wonderling L.D."/>
            <person name="Uhlich G.A."/>
            <person name="Bayles D.O."/>
            <person name="Luchansky J.B."/>
            <person name="Fraser C.M."/>
        </authorList>
    </citation>
    <scope>NUCLEOTIDE SEQUENCE [LARGE SCALE GENOMIC DNA]</scope>
    <source>
        <strain>F2365</strain>
    </source>
</reference>
<name>DAPH_LISMF</name>
<sequence>MEQMDAHQIISFIQNSKKATPVKVYLKGDLEKIDFPSDVKTFITGNAGTIFGEWAVVEPFLEANKANIEDYVIENDRRNSAIPLLDMKNINARIEPGAVIRDQVTIGDNAVIMMGASINIGSVIGDGTMIDMNVVLGGRATVGKNCHIGAGSVLAGVVEPPSAQPVVVEDNVVVGANVVVLEGVRIGEGAVVAAGAIVTKDVAPGTVVAGIPARELKKLDAKTASKTEIMQELRQL</sequence>
<dbReference type="EC" id="2.3.1.89" evidence="1"/>
<dbReference type="EMBL" id="AE017262">
    <property type="protein sequence ID" value="AAT03809.1"/>
    <property type="molecule type" value="Genomic_DNA"/>
</dbReference>
<dbReference type="SMR" id="Q721F5"/>
<dbReference type="KEGG" id="lmf:LMOf2365_1032"/>
<dbReference type="HOGENOM" id="CLU_103751_0_0_9"/>
<dbReference type="UniPathway" id="UPA00034">
    <property type="reaction ID" value="UER00022"/>
</dbReference>
<dbReference type="GO" id="GO:0047200">
    <property type="term" value="F:tetrahydrodipicolinate N-acetyltransferase activity"/>
    <property type="evidence" value="ECO:0007669"/>
    <property type="project" value="UniProtKB-EC"/>
</dbReference>
<dbReference type="GO" id="GO:0019877">
    <property type="term" value="P:diaminopimelate biosynthetic process"/>
    <property type="evidence" value="ECO:0007669"/>
    <property type="project" value="UniProtKB-UniRule"/>
</dbReference>
<dbReference type="GO" id="GO:0009089">
    <property type="term" value="P:lysine biosynthetic process via diaminopimelate"/>
    <property type="evidence" value="ECO:0007669"/>
    <property type="project" value="UniProtKB-UniRule"/>
</dbReference>
<dbReference type="Gene3D" id="2.160.10.10">
    <property type="entry name" value="Hexapeptide repeat proteins"/>
    <property type="match status" value="1"/>
</dbReference>
<dbReference type="Gene3D" id="3.30.70.250">
    <property type="entry name" value="Malonyl-CoA ACP transacylase, ACP-binding"/>
    <property type="match status" value="1"/>
</dbReference>
<dbReference type="HAMAP" id="MF_01691">
    <property type="entry name" value="DapH"/>
    <property type="match status" value="1"/>
</dbReference>
<dbReference type="InterPro" id="IPR019873">
    <property type="entry name" value="DapH"/>
</dbReference>
<dbReference type="InterPro" id="IPR013710">
    <property type="entry name" value="DapH_N"/>
</dbReference>
<dbReference type="InterPro" id="IPR001451">
    <property type="entry name" value="Hexapep"/>
</dbReference>
<dbReference type="InterPro" id="IPR018357">
    <property type="entry name" value="Hexapep_transf_CS"/>
</dbReference>
<dbReference type="InterPro" id="IPR050179">
    <property type="entry name" value="Trans_hexapeptide_repeat"/>
</dbReference>
<dbReference type="InterPro" id="IPR011004">
    <property type="entry name" value="Trimer_LpxA-like_sf"/>
</dbReference>
<dbReference type="NCBIfam" id="TIGR03532">
    <property type="entry name" value="DapD_Ac"/>
    <property type="match status" value="1"/>
</dbReference>
<dbReference type="PANTHER" id="PTHR43300:SF10">
    <property type="entry name" value="2,3,4,5-TETRAHYDROPYRIDINE-2,6-DICARBOXYLATE N-ACETYLTRANSFERASE"/>
    <property type="match status" value="1"/>
</dbReference>
<dbReference type="PANTHER" id="PTHR43300">
    <property type="entry name" value="ACETYLTRANSFERASE"/>
    <property type="match status" value="1"/>
</dbReference>
<dbReference type="Pfam" id="PF08503">
    <property type="entry name" value="DapH_N"/>
    <property type="match status" value="1"/>
</dbReference>
<dbReference type="Pfam" id="PF00132">
    <property type="entry name" value="Hexapep"/>
    <property type="match status" value="1"/>
</dbReference>
<dbReference type="Pfam" id="PF14602">
    <property type="entry name" value="Hexapep_2"/>
    <property type="match status" value="1"/>
</dbReference>
<dbReference type="SUPFAM" id="SSF51161">
    <property type="entry name" value="Trimeric LpxA-like enzymes"/>
    <property type="match status" value="1"/>
</dbReference>
<dbReference type="PROSITE" id="PS00101">
    <property type="entry name" value="HEXAPEP_TRANSFERASES"/>
    <property type="match status" value="1"/>
</dbReference>